<keyword id="KW-1003">Cell membrane</keyword>
<keyword id="KW-0472">Membrane</keyword>
<keyword id="KW-1185">Reference proteome</keyword>
<keyword id="KW-0812">Transmembrane</keyword>
<keyword id="KW-1133">Transmembrane helix</keyword>
<evidence type="ECO:0000255" key="1"/>
<evidence type="ECO:0000305" key="2"/>
<reference key="1">
    <citation type="journal article" date="1998" name="Science">
        <title>Complete genome sequence of Treponema pallidum, the syphilis spirochete.</title>
        <authorList>
            <person name="Fraser C.M."/>
            <person name="Norris S.J."/>
            <person name="Weinstock G.M."/>
            <person name="White O."/>
            <person name="Sutton G.G."/>
            <person name="Dodson R.J."/>
            <person name="Gwinn M.L."/>
            <person name="Hickey E.K."/>
            <person name="Clayton R.A."/>
            <person name="Ketchum K.A."/>
            <person name="Sodergren E."/>
            <person name="Hardham J.M."/>
            <person name="McLeod M.P."/>
            <person name="Salzberg S.L."/>
            <person name="Peterson J.D."/>
            <person name="Khalak H.G."/>
            <person name="Richardson D.L."/>
            <person name="Howell J.K."/>
            <person name="Chidambaram M."/>
            <person name="Utterback T.R."/>
            <person name="McDonald L.A."/>
            <person name="Artiach P."/>
            <person name="Bowman C."/>
            <person name="Cotton M.D."/>
            <person name="Fujii C."/>
            <person name="Garland S.A."/>
            <person name="Hatch B."/>
            <person name="Horst K."/>
            <person name="Roberts K.M."/>
            <person name="Sandusky M."/>
            <person name="Weidman J.F."/>
            <person name="Smith H.O."/>
            <person name="Venter J.C."/>
        </authorList>
    </citation>
    <scope>NUCLEOTIDE SEQUENCE [LARGE SCALE GENOMIC DNA]</scope>
    <source>
        <strain>Nichols</strain>
    </source>
</reference>
<gene>
    <name type="ordered locus">TP_0226</name>
</gene>
<dbReference type="EMBL" id="AE000520">
    <property type="protein sequence ID" value="AAC65219.1"/>
    <property type="molecule type" value="Genomic_DNA"/>
</dbReference>
<dbReference type="PIR" id="H71350">
    <property type="entry name" value="H71350"/>
</dbReference>
<dbReference type="RefSeq" id="WP_010881674.1">
    <property type="nucleotide sequence ID" value="NC_021490.2"/>
</dbReference>
<dbReference type="SMR" id="O83254"/>
<dbReference type="IntAct" id="O83254">
    <property type="interactions" value="1"/>
</dbReference>
<dbReference type="STRING" id="243276.TP_0226"/>
<dbReference type="EnsemblBacteria" id="AAC65219">
    <property type="protein sequence ID" value="AAC65219"/>
    <property type="gene ID" value="TP_0226"/>
</dbReference>
<dbReference type="KEGG" id="tpa:TP_0226"/>
<dbReference type="KEGG" id="tpw:TPANIC_0226"/>
<dbReference type="HOGENOM" id="CLU_1214345_0_0_12"/>
<dbReference type="Proteomes" id="UP000000811">
    <property type="component" value="Chromosome"/>
</dbReference>
<dbReference type="GO" id="GO:0005886">
    <property type="term" value="C:plasma membrane"/>
    <property type="evidence" value="ECO:0007669"/>
    <property type="project" value="UniProtKB-SubCell"/>
</dbReference>
<dbReference type="InterPro" id="IPR003339">
    <property type="entry name" value="ABC/ECF_trnsptr_transmembrane"/>
</dbReference>
<dbReference type="Pfam" id="PF02361">
    <property type="entry name" value="CbiQ"/>
    <property type="match status" value="1"/>
</dbReference>
<accession>O83254</accession>
<sequence length="228" mass="26203">MFFSLYERRQSLLHRAPPVAKVASFALLLLCCNAQSWCMHASLTLVLLALTLIVTRSLKCVAAHIRVVSIYLAFFFSLKILHTFFSTGVVSATQINQHIHAGYHIGIRLFLLLCASSLFYACTSRLELFSLCLRMGKVLHVRSTAYTTPCAVYVMMLVLYFGHDIFREWTELRFVWRARTRANTSFYNWVDATLHFSKTLLTRLLERAQHPSLRRADFKVSDNILSSE</sequence>
<comment type="subcellular location">
    <subcellularLocation>
        <location evidence="2">Cell membrane</location>
        <topology evidence="2">Multi-pass membrane protein</topology>
    </subcellularLocation>
</comment>
<organism>
    <name type="scientific">Treponema pallidum (strain Nichols)</name>
    <dbReference type="NCBI Taxonomy" id="243276"/>
    <lineage>
        <taxon>Bacteria</taxon>
        <taxon>Pseudomonadati</taxon>
        <taxon>Spirochaetota</taxon>
        <taxon>Spirochaetia</taxon>
        <taxon>Spirochaetales</taxon>
        <taxon>Treponemataceae</taxon>
        <taxon>Treponema</taxon>
    </lineage>
</organism>
<protein>
    <recommendedName>
        <fullName>Uncharacterized protein TP_0226</fullName>
    </recommendedName>
</protein>
<name>Y226_TREPA</name>
<feature type="chain" id="PRO_0000202215" description="Uncharacterized protein TP_0226">
    <location>
        <begin position="1"/>
        <end position="228"/>
    </location>
</feature>
<feature type="transmembrane region" description="Helical" evidence="1">
    <location>
        <begin position="37"/>
        <end position="54"/>
    </location>
</feature>
<feature type="transmembrane region" description="Helical" evidence="1">
    <location>
        <begin position="67"/>
        <end position="89"/>
    </location>
</feature>
<feature type="transmembrane region" description="Helical" evidence="1">
    <location>
        <begin position="104"/>
        <end position="126"/>
    </location>
</feature>
<feature type="transmembrane region" description="Helical" evidence="1">
    <location>
        <begin position="138"/>
        <end position="160"/>
    </location>
</feature>
<proteinExistence type="predicted"/>